<reference key="1">
    <citation type="journal article" date="2007" name="Nat. Biotechnol.">
        <title>Complete genome sequence of the fish pathogen Flavobacterium psychrophilum.</title>
        <authorList>
            <person name="Duchaud E."/>
            <person name="Boussaha M."/>
            <person name="Loux V."/>
            <person name="Bernardet J.-F."/>
            <person name="Michel C."/>
            <person name="Kerouault B."/>
            <person name="Mondot S."/>
            <person name="Nicolas P."/>
            <person name="Bossy R."/>
            <person name="Caron C."/>
            <person name="Bessieres P."/>
            <person name="Gibrat J.-F."/>
            <person name="Claverol S."/>
            <person name="Dumetz F."/>
            <person name="Le Henaff M."/>
            <person name="Benmansour A."/>
        </authorList>
    </citation>
    <scope>NUCLEOTIDE SEQUENCE [LARGE SCALE GENOMIC DNA]</scope>
    <source>
        <strain>ATCC 49511 / DSM 21280 / CIP 103535 / JIP02/86</strain>
    </source>
</reference>
<name>SURE_FLAPJ</name>
<keyword id="KW-0963">Cytoplasm</keyword>
<keyword id="KW-0378">Hydrolase</keyword>
<keyword id="KW-0479">Metal-binding</keyword>
<keyword id="KW-0547">Nucleotide-binding</keyword>
<keyword id="KW-1185">Reference proteome</keyword>
<accession>A6H213</accession>
<sequence length="257" mass="28207">MSKPLILVTNDDGISAPGIRSLIAVMQEIGTVVVVAPDSPQSAMGHAITINSTLHLNKISAENAAVTEYSCSGTPVDCVKLAVNEILKQKPDLCVSGVNHGSNSSINVIYSGTMSAAVEAGIEGIPAIGFSLLDYDWNADFETFKPYIKKIALEVLQKGLPDSVVLNVNFPKRKEEDLKGIKICRQAKAMWEEKFDKRKTPQGKDYYWLTGEFVNHDKGEDTDEWALQNGYISVVPVQFDMTAHHAIQALNNWDLNK</sequence>
<comment type="function">
    <text evidence="1">Nucleotidase that shows phosphatase activity on nucleoside 5'-monophosphates.</text>
</comment>
<comment type="catalytic activity">
    <reaction evidence="1">
        <text>a ribonucleoside 5'-phosphate + H2O = a ribonucleoside + phosphate</text>
        <dbReference type="Rhea" id="RHEA:12484"/>
        <dbReference type="ChEBI" id="CHEBI:15377"/>
        <dbReference type="ChEBI" id="CHEBI:18254"/>
        <dbReference type="ChEBI" id="CHEBI:43474"/>
        <dbReference type="ChEBI" id="CHEBI:58043"/>
        <dbReference type="EC" id="3.1.3.5"/>
    </reaction>
</comment>
<comment type="cofactor">
    <cofactor evidence="1">
        <name>a divalent metal cation</name>
        <dbReference type="ChEBI" id="CHEBI:60240"/>
    </cofactor>
    <text evidence="1">Binds 1 divalent metal cation per subunit.</text>
</comment>
<comment type="subcellular location">
    <subcellularLocation>
        <location evidence="1">Cytoplasm</location>
    </subcellularLocation>
</comment>
<comment type="similarity">
    <text evidence="1">Belongs to the SurE nucleotidase family.</text>
</comment>
<gene>
    <name evidence="1" type="primary">surE</name>
    <name type="ordered locus">FP2332</name>
</gene>
<evidence type="ECO:0000255" key="1">
    <source>
        <dbReference type="HAMAP-Rule" id="MF_00060"/>
    </source>
</evidence>
<dbReference type="EC" id="3.1.3.5" evidence="1"/>
<dbReference type="EMBL" id="AM398681">
    <property type="protein sequence ID" value="CAL44387.1"/>
    <property type="molecule type" value="Genomic_DNA"/>
</dbReference>
<dbReference type="RefSeq" id="WP_011964421.1">
    <property type="nucleotide sequence ID" value="NC_009613.3"/>
</dbReference>
<dbReference type="RefSeq" id="YP_001297188.1">
    <property type="nucleotide sequence ID" value="NC_009613.3"/>
</dbReference>
<dbReference type="SMR" id="A6H213"/>
<dbReference type="STRING" id="402612.FP2332"/>
<dbReference type="EnsemblBacteria" id="CAL44387">
    <property type="protein sequence ID" value="CAL44387"/>
    <property type="gene ID" value="FP2332"/>
</dbReference>
<dbReference type="GeneID" id="66553437"/>
<dbReference type="KEGG" id="fps:FP2332"/>
<dbReference type="PATRIC" id="fig|402612.5.peg.2386"/>
<dbReference type="eggNOG" id="COG0496">
    <property type="taxonomic scope" value="Bacteria"/>
</dbReference>
<dbReference type="HOGENOM" id="CLU_045192_1_0_10"/>
<dbReference type="OrthoDB" id="9780815at2"/>
<dbReference type="Proteomes" id="UP000006394">
    <property type="component" value="Chromosome"/>
</dbReference>
<dbReference type="GO" id="GO:0005737">
    <property type="term" value="C:cytoplasm"/>
    <property type="evidence" value="ECO:0007669"/>
    <property type="project" value="UniProtKB-SubCell"/>
</dbReference>
<dbReference type="GO" id="GO:0008253">
    <property type="term" value="F:5'-nucleotidase activity"/>
    <property type="evidence" value="ECO:0007669"/>
    <property type="project" value="UniProtKB-UniRule"/>
</dbReference>
<dbReference type="GO" id="GO:0046872">
    <property type="term" value="F:metal ion binding"/>
    <property type="evidence" value="ECO:0007669"/>
    <property type="project" value="UniProtKB-UniRule"/>
</dbReference>
<dbReference type="GO" id="GO:0000166">
    <property type="term" value="F:nucleotide binding"/>
    <property type="evidence" value="ECO:0007669"/>
    <property type="project" value="UniProtKB-KW"/>
</dbReference>
<dbReference type="FunFam" id="3.40.1210.10:FF:000001">
    <property type="entry name" value="5'/3'-nucleotidase SurE"/>
    <property type="match status" value="1"/>
</dbReference>
<dbReference type="Gene3D" id="3.40.1210.10">
    <property type="entry name" value="Survival protein SurE-like phosphatase/nucleotidase"/>
    <property type="match status" value="1"/>
</dbReference>
<dbReference type="HAMAP" id="MF_00060">
    <property type="entry name" value="SurE"/>
    <property type="match status" value="1"/>
</dbReference>
<dbReference type="InterPro" id="IPR030048">
    <property type="entry name" value="SurE"/>
</dbReference>
<dbReference type="InterPro" id="IPR002828">
    <property type="entry name" value="SurE-like_Pase/nucleotidase"/>
</dbReference>
<dbReference type="InterPro" id="IPR036523">
    <property type="entry name" value="SurE-like_sf"/>
</dbReference>
<dbReference type="NCBIfam" id="NF001490">
    <property type="entry name" value="PRK00346.1-4"/>
    <property type="match status" value="1"/>
</dbReference>
<dbReference type="NCBIfam" id="NF001492">
    <property type="entry name" value="PRK00346.2-2"/>
    <property type="match status" value="1"/>
</dbReference>
<dbReference type="NCBIfam" id="TIGR00087">
    <property type="entry name" value="surE"/>
    <property type="match status" value="1"/>
</dbReference>
<dbReference type="PANTHER" id="PTHR30457">
    <property type="entry name" value="5'-NUCLEOTIDASE SURE"/>
    <property type="match status" value="1"/>
</dbReference>
<dbReference type="PANTHER" id="PTHR30457:SF0">
    <property type="entry name" value="PHOSPHATASE, PUTATIVE (AFU_ORTHOLOGUE AFUA_4G01070)-RELATED"/>
    <property type="match status" value="1"/>
</dbReference>
<dbReference type="Pfam" id="PF01975">
    <property type="entry name" value="SurE"/>
    <property type="match status" value="1"/>
</dbReference>
<dbReference type="SUPFAM" id="SSF64167">
    <property type="entry name" value="SurE-like"/>
    <property type="match status" value="1"/>
</dbReference>
<protein>
    <recommendedName>
        <fullName evidence="1">5'-nucleotidase SurE</fullName>
        <ecNumber evidence="1">3.1.3.5</ecNumber>
    </recommendedName>
    <alternativeName>
        <fullName evidence="1">Nucleoside 5'-monophosphate phosphohydrolase</fullName>
    </alternativeName>
</protein>
<feature type="chain" id="PRO_0000335261" description="5'-nucleotidase SurE">
    <location>
        <begin position="1"/>
        <end position="257"/>
    </location>
</feature>
<feature type="binding site" evidence="1">
    <location>
        <position position="11"/>
    </location>
    <ligand>
        <name>a divalent metal cation</name>
        <dbReference type="ChEBI" id="CHEBI:60240"/>
    </ligand>
</feature>
<feature type="binding site" evidence="1">
    <location>
        <position position="12"/>
    </location>
    <ligand>
        <name>a divalent metal cation</name>
        <dbReference type="ChEBI" id="CHEBI:60240"/>
    </ligand>
</feature>
<feature type="binding site" evidence="1">
    <location>
        <position position="42"/>
    </location>
    <ligand>
        <name>a divalent metal cation</name>
        <dbReference type="ChEBI" id="CHEBI:60240"/>
    </ligand>
</feature>
<feature type="binding site" evidence="1">
    <location>
        <position position="99"/>
    </location>
    <ligand>
        <name>a divalent metal cation</name>
        <dbReference type="ChEBI" id="CHEBI:60240"/>
    </ligand>
</feature>
<proteinExistence type="inferred from homology"/>
<organism>
    <name type="scientific">Flavobacterium psychrophilum (strain ATCC 49511 / DSM 21280 / CIP 103535 / JIP02/86)</name>
    <dbReference type="NCBI Taxonomy" id="402612"/>
    <lineage>
        <taxon>Bacteria</taxon>
        <taxon>Pseudomonadati</taxon>
        <taxon>Bacteroidota</taxon>
        <taxon>Flavobacteriia</taxon>
        <taxon>Flavobacteriales</taxon>
        <taxon>Flavobacteriaceae</taxon>
        <taxon>Flavobacterium</taxon>
    </lineage>
</organism>